<dbReference type="EMBL" id="CP000912">
    <property type="protein sequence ID" value="ABY40157.1"/>
    <property type="molecule type" value="Genomic_DNA"/>
</dbReference>
<dbReference type="SMR" id="A9WWM1"/>
<dbReference type="KEGG" id="bmt:BSUIS_B1222"/>
<dbReference type="HOGENOM" id="CLU_135723_3_2_5"/>
<dbReference type="Proteomes" id="UP000008545">
    <property type="component" value="Chromosome II"/>
</dbReference>
<dbReference type="GO" id="GO:1990904">
    <property type="term" value="C:ribonucleoprotein complex"/>
    <property type="evidence" value="ECO:0007669"/>
    <property type="project" value="UniProtKB-KW"/>
</dbReference>
<dbReference type="GO" id="GO:0005840">
    <property type="term" value="C:ribosome"/>
    <property type="evidence" value="ECO:0007669"/>
    <property type="project" value="UniProtKB-KW"/>
</dbReference>
<dbReference type="GO" id="GO:0003735">
    <property type="term" value="F:structural constituent of ribosome"/>
    <property type="evidence" value="ECO:0007669"/>
    <property type="project" value="InterPro"/>
</dbReference>
<dbReference type="GO" id="GO:0006412">
    <property type="term" value="P:translation"/>
    <property type="evidence" value="ECO:0007669"/>
    <property type="project" value="UniProtKB-UniRule"/>
</dbReference>
<dbReference type="HAMAP" id="MF_00251">
    <property type="entry name" value="Ribosomal_bL36"/>
    <property type="match status" value="1"/>
</dbReference>
<dbReference type="InterPro" id="IPR000473">
    <property type="entry name" value="Ribosomal_bL36"/>
</dbReference>
<dbReference type="InterPro" id="IPR035977">
    <property type="entry name" value="Ribosomal_bL36_sp"/>
</dbReference>
<dbReference type="InterPro" id="IPR047621">
    <property type="entry name" value="Ribosomal_L36_bact"/>
</dbReference>
<dbReference type="NCBIfam" id="NF002021">
    <property type="entry name" value="PRK00831.1"/>
    <property type="match status" value="1"/>
</dbReference>
<dbReference type="NCBIfam" id="TIGR01022">
    <property type="entry name" value="rpmJ_bact"/>
    <property type="match status" value="1"/>
</dbReference>
<dbReference type="PANTHER" id="PTHR47781">
    <property type="entry name" value="50S RIBOSOMAL PROTEIN L36 2"/>
    <property type="match status" value="1"/>
</dbReference>
<dbReference type="PANTHER" id="PTHR47781:SF1">
    <property type="entry name" value="LARGE RIBOSOMAL SUBUNIT PROTEIN BL36B"/>
    <property type="match status" value="1"/>
</dbReference>
<dbReference type="Pfam" id="PF00444">
    <property type="entry name" value="Ribosomal_L36"/>
    <property type="match status" value="1"/>
</dbReference>
<dbReference type="SUPFAM" id="SSF57840">
    <property type="entry name" value="Ribosomal protein L36"/>
    <property type="match status" value="1"/>
</dbReference>
<dbReference type="PROSITE" id="PS00828">
    <property type="entry name" value="RIBOSOMAL_L36"/>
    <property type="match status" value="1"/>
</dbReference>
<comment type="similarity">
    <text evidence="1">Belongs to the bacterial ribosomal protein bL36 family.</text>
</comment>
<organism>
    <name type="scientific">Brucella suis (strain ATCC 23445 / NCTC 10510)</name>
    <dbReference type="NCBI Taxonomy" id="470137"/>
    <lineage>
        <taxon>Bacteria</taxon>
        <taxon>Pseudomonadati</taxon>
        <taxon>Pseudomonadota</taxon>
        <taxon>Alphaproteobacteria</taxon>
        <taxon>Hyphomicrobiales</taxon>
        <taxon>Brucellaceae</taxon>
        <taxon>Brucella/Ochrobactrum group</taxon>
        <taxon>Brucella</taxon>
    </lineage>
</organism>
<proteinExistence type="inferred from homology"/>
<gene>
    <name evidence="1" type="primary">rpmJ</name>
    <name type="ordered locus">BSUIS_B1222</name>
</gene>
<name>RL36_BRUSI</name>
<evidence type="ECO:0000255" key="1">
    <source>
        <dbReference type="HAMAP-Rule" id="MF_00251"/>
    </source>
</evidence>
<evidence type="ECO:0000305" key="2"/>
<feature type="chain" id="PRO_1000078464" description="Large ribosomal subunit protein bL36">
    <location>
        <begin position="1"/>
        <end position="41"/>
    </location>
</feature>
<protein>
    <recommendedName>
        <fullName evidence="1">Large ribosomal subunit protein bL36</fullName>
    </recommendedName>
    <alternativeName>
        <fullName evidence="2">50S ribosomal protein L36</fullName>
    </alternativeName>
</protein>
<keyword id="KW-0687">Ribonucleoprotein</keyword>
<keyword id="KW-0689">Ribosomal protein</keyword>
<accession>A9WWM1</accession>
<reference key="1">
    <citation type="submission" date="2007-12" db="EMBL/GenBank/DDBJ databases">
        <title>Brucella suis ATCC 23445 whole genome shotgun sequencing project.</title>
        <authorList>
            <person name="Setubal J.C."/>
            <person name="Bowns C."/>
            <person name="Boyle S."/>
            <person name="Crasta O.R."/>
            <person name="Czar M.J."/>
            <person name="Dharmanolla C."/>
            <person name="Gillespie J.J."/>
            <person name="Kenyon R.W."/>
            <person name="Lu J."/>
            <person name="Mane S."/>
            <person name="Mohapatra S."/>
            <person name="Nagrani S."/>
            <person name="Purkayastha A."/>
            <person name="Rajasimha H.K."/>
            <person name="Shallom J.M."/>
            <person name="Shallom S."/>
            <person name="Shukla M."/>
            <person name="Snyder E.E."/>
            <person name="Sobral B.W."/>
            <person name="Wattam A.R."/>
            <person name="Will R."/>
            <person name="Williams K."/>
            <person name="Yoo H."/>
            <person name="Bruce D."/>
            <person name="Detter C."/>
            <person name="Munk C."/>
            <person name="Brettin T.S."/>
        </authorList>
    </citation>
    <scope>NUCLEOTIDE SEQUENCE [LARGE SCALE GENOMIC DNA]</scope>
    <source>
        <strain>ATCC 23445 / NCTC 10510</strain>
    </source>
</reference>
<sequence length="41" mass="4851">MKIKNSLKALKARHRDCQLVRRKGRVYIINKTAPRFKARQG</sequence>